<feature type="chain" id="PRO_0000262169" description="Phosphatidylserine decarboxylase beta chain" evidence="1">
    <location>
        <begin position="1"/>
        <end position="246"/>
    </location>
</feature>
<feature type="chain" id="PRO_0000262170" description="Phosphatidylserine decarboxylase alpha chain" evidence="1">
    <location>
        <begin position="247"/>
        <end position="280"/>
    </location>
</feature>
<feature type="active site" description="Charge relay system; for autoendoproteolytic cleavage activity" evidence="1">
    <location>
        <position position="88"/>
    </location>
</feature>
<feature type="active site" description="Charge relay system; for autoendoproteolytic cleavage activity" evidence="1">
    <location>
        <position position="144"/>
    </location>
</feature>
<feature type="active site" description="Charge relay system; for autoendoproteolytic cleavage activity" evidence="1">
    <location>
        <position position="247"/>
    </location>
</feature>
<feature type="active site" description="Schiff-base intermediate with substrate; via pyruvic acid; for decarboxylase activity" evidence="1">
    <location>
        <position position="247"/>
    </location>
</feature>
<feature type="site" description="Cleavage (non-hydrolytic); by autocatalysis" evidence="1">
    <location>
        <begin position="246"/>
        <end position="247"/>
    </location>
</feature>
<feature type="modified residue" description="Pyruvic acid (Ser); by autocatalysis" evidence="1">
    <location>
        <position position="247"/>
    </location>
</feature>
<keyword id="KW-1003">Cell membrane</keyword>
<keyword id="KW-0210">Decarboxylase</keyword>
<keyword id="KW-0444">Lipid biosynthesis</keyword>
<keyword id="KW-0443">Lipid metabolism</keyword>
<keyword id="KW-0456">Lyase</keyword>
<keyword id="KW-0472">Membrane</keyword>
<keyword id="KW-0594">Phospholipid biosynthesis</keyword>
<keyword id="KW-1208">Phospholipid metabolism</keyword>
<keyword id="KW-0670">Pyruvate</keyword>
<keyword id="KW-0865">Zymogen</keyword>
<organism>
    <name type="scientific">Xanthomonas euvesicatoria pv. vesicatoria (strain 85-10)</name>
    <name type="common">Xanthomonas campestris pv. vesicatoria</name>
    <dbReference type="NCBI Taxonomy" id="316273"/>
    <lineage>
        <taxon>Bacteria</taxon>
        <taxon>Pseudomonadati</taxon>
        <taxon>Pseudomonadota</taxon>
        <taxon>Gammaproteobacteria</taxon>
        <taxon>Lysobacterales</taxon>
        <taxon>Lysobacteraceae</taxon>
        <taxon>Xanthomonas</taxon>
    </lineage>
</organism>
<comment type="function">
    <text evidence="1">Catalyzes the formation of phosphatidylethanolamine (PtdEtn) from phosphatidylserine (PtdSer).</text>
</comment>
<comment type="catalytic activity">
    <reaction evidence="1">
        <text>a 1,2-diacyl-sn-glycero-3-phospho-L-serine + H(+) = a 1,2-diacyl-sn-glycero-3-phosphoethanolamine + CO2</text>
        <dbReference type="Rhea" id="RHEA:20828"/>
        <dbReference type="ChEBI" id="CHEBI:15378"/>
        <dbReference type="ChEBI" id="CHEBI:16526"/>
        <dbReference type="ChEBI" id="CHEBI:57262"/>
        <dbReference type="ChEBI" id="CHEBI:64612"/>
        <dbReference type="EC" id="4.1.1.65"/>
    </reaction>
</comment>
<comment type="cofactor">
    <cofactor evidence="1">
        <name>pyruvate</name>
        <dbReference type="ChEBI" id="CHEBI:15361"/>
    </cofactor>
    <text evidence="1">Binds 1 pyruvoyl group covalently per subunit.</text>
</comment>
<comment type="pathway">
    <text evidence="1">Phospholipid metabolism; phosphatidylethanolamine biosynthesis; phosphatidylethanolamine from CDP-diacylglycerol: step 2/2.</text>
</comment>
<comment type="subunit">
    <text evidence="1">Heterodimer of a large membrane-associated beta subunit and a small pyruvoyl-containing alpha subunit.</text>
</comment>
<comment type="subcellular location">
    <subcellularLocation>
        <location evidence="1">Cell membrane</location>
        <topology evidence="1">Peripheral membrane protein</topology>
    </subcellularLocation>
</comment>
<comment type="PTM">
    <text evidence="1">Is synthesized initially as an inactive proenzyme. Formation of the active enzyme involves a self-maturation process in which the active site pyruvoyl group is generated from an internal serine residue via an autocatalytic post-translational modification. Two non-identical subunits are generated from the proenzyme in this reaction, and the pyruvate is formed at the N-terminus of the alpha chain, which is derived from the carboxyl end of the proenzyme. The autoendoproteolytic cleavage occurs by a canonical serine protease mechanism, in which the side chain hydroxyl group of the serine supplies its oxygen atom to form the C-terminus of the beta chain, while the remainder of the serine residue undergoes an oxidative deamination to produce ammonia and the pyruvoyl prosthetic group on the alpha chain. During this reaction, the Ser that is part of the protease active site of the proenzyme becomes the pyruvoyl prosthetic group, which constitutes an essential element of the active site of the mature decarboxylase.</text>
</comment>
<comment type="similarity">
    <text evidence="1">Belongs to the phosphatidylserine decarboxylase family. PSD-B subfamily. Prokaryotic type I sub-subfamily.</text>
</comment>
<sequence length="280" mass="30753">MSLVTSLTYVLPHRLLSSLARALAYSDRPATKQWLIDTVTRKFGVDLSEAQEPDPRAYPTFNAFFTRALKPGARVPDADPAALLMPADGRISQLGPIENGRIFQAKGQSFTAAELLGDEAAAAPFNDGLFATVYLSPKDYHRVHMPWTGTLRETVHVPGRLFSVGPDAVRNVPRLFARNERLVCHFDTDFGPMASVMVGALLVSGVETVWSGVEIPRYGDRITRKDYRGKGIVLEKFAEMARFNYGSTVIVLLPPGVARLDGRLAAETSVRLGQALARRQ</sequence>
<name>PSD_XANE5</name>
<proteinExistence type="inferred from homology"/>
<reference key="1">
    <citation type="journal article" date="2005" name="J. Bacteriol.">
        <title>Insights into genome plasticity and pathogenicity of the plant pathogenic Bacterium Xanthomonas campestris pv. vesicatoria revealed by the complete genome sequence.</title>
        <authorList>
            <person name="Thieme F."/>
            <person name="Koebnik R."/>
            <person name="Bekel T."/>
            <person name="Berger C."/>
            <person name="Boch J."/>
            <person name="Buettner D."/>
            <person name="Caldana C."/>
            <person name="Gaigalat L."/>
            <person name="Goesmann A."/>
            <person name="Kay S."/>
            <person name="Kirchner O."/>
            <person name="Lanz C."/>
            <person name="Linke B."/>
            <person name="McHardy A.C."/>
            <person name="Meyer F."/>
            <person name="Mittenhuber G."/>
            <person name="Nies D.H."/>
            <person name="Niesbach-Kloesgen U."/>
            <person name="Patschkowski T."/>
            <person name="Rueckert C."/>
            <person name="Rupp O."/>
            <person name="Schneiker S."/>
            <person name="Schuster S.C."/>
            <person name="Vorhoelter F.J."/>
            <person name="Weber E."/>
            <person name="Puehler A."/>
            <person name="Bonas U."/>
            <person name="Bartels D."/>
            <person name="Kaiser O."/>
        </authorList>
    </citation>
    <scope>NUCLEOTIDE SEQUENCE [LARGE SCALE GENOMIC DNA]</scope>
    <source>
        <strain>85-10</strain>
    </source>
</reference>
<evidence type="ECO:0000255" key="1">
    <source>
        <dbReference type="HAMAP-Rule" id="MF_00662"/>
    </source>
</evidence>
<dbReference type="EC" id="4.1.1.65" evidence="1"/>
<dbReference type="EMBL" id="AM039952">
    <property type="protein sequence ID" value="CAJ24559.1"/>
    <property type="molecule type" value="Genomic_DNA"/>
</dbReference>
<dbReference type="SMR" id="Q3BRK2"/>
<dbReference type="STRING" id="456327.BJD11_08450"/>
<dbReference type="KEGG" id="xcv:XCV2880"/>
<dbReference type="eggNOG" id="COG0688">
    <property type="taxonomic scope" value="Bacteria"/>
</dbReference>
<dbReference type="HOGENOM" id="CLU_029061_4_1_6"/>
<dbReference type="UniPathway" id="UPA00558">
    <property type="reaction ID" value="UER00616"/>
</dbReference>
<dbReference type="Proteomes" id="UP000007069">
    <property type="component" value="Chromosome"/>
</dbReference>
<dbReference type="GO" id="GO:0005886">
    <property type="term" value="C:plasma membrane"/>
    <property type="evidence" value="ECO:0007669"/>
    <property type="project" value="UniProtKB-SubCell"/>
</dbReference>
<dbReference type="GO" id="GO:0004609">
    <property type="term" value="F:phosphatidylserine decarboxylase activity"/>
    <property type="evidence" value="ECO:0007669"/>
    <property type="project" value="UniProtKB-UniRule"/>
</dbReference>
<dbReference type="GO" id="GO:0006646">
    <property type="term" value="P:phosphatidylethanolamine biosynthetic process"/>
    <property type="evidence" value="ECO:0007669"/>
    <property type="project" value="UniProtKB-UniRule"/>
</dbReference>
<dbReference type="HAMAP" id="MF_00662">
    <property type="entry name" value="PS_decarb_PSD_B_type1"/>
    <property type="match status" value="1"/>
</dbReference>
<dbReference type="InterPro" id="IPR003817">
    <property type="entry name" value="PS_Dcarbxylase"/>
</dbReference>
<dbReference type="InterPro" id="IPR033177">
    <property type="entry name" value="PSD-B"/>
</dbReference>
<dbReference type="InterPro" id="IPR033178">
    <property type="entry name" value="PSD_type1_pro"/>
</dbReference>
<dbReference type="NCBIfam" id="TIGR00163">
    <property type="entry name" value="PS_decarb"/>
    <property type="match status" value="1"/>
</dbReference>
<dbReference type="PANTHER" id="PTHR10067">
    <property type="entry name" value="PHOSPHATIDYLSERINE DECARBOXYLASE"/>
    <property type="match status" value="1"/>
</dbReference>
<dbReference type="PANTHER" id="PTHR10067:SF6">
    <property type="entry name" value="PHOSPHATIDYLSERINE DECARBOXYLASE PROENZYME, MITOCHONDRIAL"/>
    <property type="match status" value="1"/>
</dbReference>
<dbReference type="Pfam" id="PF02666">
    <property type="entry name" value="PS_Dcarbxylase"/>
    <property type="match status" value="1"/>
</dbReference>
<protein>
    <recommendedName>
        <fullName evidence="1">Phosphatidylserine decarboxylase proenzyme</fullName>
        <ecNumber evidence="1">4.1.1.65</ecNumber>
    </recommendedName>
    <component>
        <recommendedName>
            <fullName evidence="1">Phosphatidylserine decarboxylase alpha chain</fullName>
        </recommendedName>
    </component>
    <component>
        <recommendedName>
            <fullName evidence="1">Phosphatidylserine decarboxylase beta chain</fullName>
        </recommendedName>
    </component>
</protein>
<gene>
    <name evidence="1" type="primary">psd</name>
    <name type="ordered locus">XCV2880</name>
</gene>
<accession>Q3BRK2</accession>